<accession>P0AG02</accession>
<accession>P25905</accession>
<accession>P76752</accession>
<protein>
    <recommendedName>
        <fullName evidence="1">ECA polysaccharide chain length modulation protein</fullName>
    </recommendedName>
</protein>
<evidence type="ECO:0000255" key="1">
    <source>
        <dbReference type="HAMAP-Rule" id="MF_02025"/>
    </source>
</evidence>
<proteinExistence type="inferred from homology"/>
<comment type="function">
    <text evidence="1">Modulates the polysaccharide chain length of enterobacterial common antigen (ECA).</text>
</comment>
<comment type="pathway">
    <text evidence="1">Bacterial outer membrane biogenesis; enterobacterial common antigen biosynthesis.</text>
</comment>
<comment type="subunit">
    <text evidence="1">Probably part of a complex composed of WzxE, WzyE and WzzE.</text>
</comment>
<comment type="subcellular location">
    <subcellularLocation>
        <location evidence="1">Cell inner membrane</location>
        <topology evidence="1">Multi-pass membrane protein</topology>
    </subcellularLocation>
</comment>
<comment type="similarity">
    <text evidence="1">Belongs to the WzzB/Cld/Rol family.</text>
</comment>
<dbReference type="EMBL" id="AE005674">
    <property type="protein sequence ID" value="AAN45296.2"/>
    <property type="molecule type" value="Genomic_DNA"/>
</dbReference>
<dbReference type="EMBL" id="AE014073">
    <property type="protein sequence ID" value="AAP18902.1"/>
    <property type="molecule type" value="Genomic_DNA"/>
</dbReference>
<dbReference type="RefSeq" id="NP_709589.2">
    <property type="nucleotide sequence ID" value="NC_004337.2"/>
</dbReference>
<dbReference type="RefSeq" id="WP_001295256.1">
    <property type="nucleotide sequence ID" value="NZ_WPGW01000028.1"/>
</dbReference>
<dbReference type="SMR" id="P0AG02"/>
<dbReference type="STRING" id="198214.SF3859"/>
<dbReference type="PaxDb" id="198214-SF3859"/>
<dbReference type="GeneID" id="1026033"/>
<dbReference type="GeneID" id="93778159"/>
<dbReference type="KEGG" id="sfl:SF3859"/>
<dbReference type="KEGG" id="sfx:S3901"/>
<dbReference type="PATRIC" id="fig|198214.7.peg.4549"/>
<dbReference type="HOGENOM" id="CLU_060925_2_1_6"/>
<dbReference type="UniPathway" id="UPA00566"/>
<dbReference type="Proteomes" id="UP000001006">
    <property type="component" value="Chromosome"/>
</dbReference>
<dbReference type="Proteomes" id="UP000002673">
    <property type="component" value="Chromosome"/>
</dbReference>
<dbReference type="GO" id="GO:0005886">
    <property type="term" value="C:plasma membrane"/>
    <property type="evidence" value="ECO:0007669"/>
    <property type="project" value="UniProtKB-SubCell"/>
</dbReference>
<dbReference type="GO" id="GO:0004713">
    <property type="term" value="F:protein tyrosine kinase activity"/>
    <property type="evidence" value="ECO:0007669"/>
    <property type="project" value="TreeGrafter"/>
</dbReference>
<dbReference type="GO" id="GO:0009246">
    <property type="term" value="P:enterobacterial common antigen biosynthetic process"/>
    <property type="evidence" value="ECO:0007669"/>
    <property type="project" value="UniProtKB-UniRule"/>
</dbReference>
<dbReference type="Gene3D" id="3.30.1890.10">
    <property type="entry name" value="FepE-like"/>
    <property type="match status" value="1"/>
</dbReference>
<dbReference type="HAMAP" id="MF_02025">
    <property type="entry name" value="WzzE"/>
    <property type="match status" value="1"/>
</dbReference>
<dbReference type="InterPro" id="IPR050445">
    <property type="entry name" value="Bact_polysacc_biosynth/exp"/>
</dbReference>
<dbReference type="InterPro" id="IPR003856">
    <property type="entry name" value="LPS_length_determ_N_term"/>
</dbReference>
<dbReference type="InterPro" id="IPR032895">
    <property type="entry name" value="WzzE"/>
</dbReference>
<dbReference type="NCBIfam" id="NF008645">
    <property type="entry name" value="PRK11638.1"/>
    <property type="match status" value="1"/>
</dbReference>
<dbReference type="PANTHER" id="PTHR32309:SF16">
    <property type="entry name" value="ECA POLYSACCHARIDE CHAIN LENGTH MODULATION PROTEIN"/>
    <property type="match status" value="1"/>
</dbReference>
<dbReference type="PANTHER" id="PTHR32309">
    <property type="entry name" value="TYROSINE-PROTEIN KINASE"/>
    <property type="match status" value="1"/>
</dbReference>
<dbReference type="Pfam" id="PF02706">
    <property type="entry name" value="Wzz"/>
    <property type="match status" value="1"/>
</dbReference>
<dbReference type="SUPFAM" id="SSF160355">
    <property type="entry name" value="Bacterial polysaccharide co-polymerase-like"/>
    <property type="match status" value="1"/>
</dbReference>
<keyword id="KW-0997">Cell inner membrane</keyword>
<keyword id="KW-1003">Cell membrane</keyword>
<keyword id="KW-0472">Membrane</keyword>
<keyword id="KW-1185">Reference proteome</keyword>
<keyword id="KW-0812">Transmembrane</keyword>
<keyword id="KW-1133">Transmembrane helix</keyword>
<reference key="1">
    <citation type="journal article" date="2002" name="Nucleic Acids Res.">
        <title>Genome sequence of Shigella flexneri 2a: insights into pathogenicity through comparison with genomes of Escherichia coli K12 and O157.</title>
        <authorList>
            <person name="Jin Q."/>
            <person name="Yuan Z."/>
            <person name="Xu J."/>
            <person name="Wang Y."/>
            <person name="Shen Y."/>
            <person name="Lu W."/>
            <person name="Wang J."/>
            <person name="Liu H."/>
            <person name="Yang J."/>
            <person name="Yang F."/>
            <person name="Zhang X."/>
            <person name="Zhang J."/>
            <person name="Yang G."/>
            <person name="Wu H."/>
            <person name="Qu D."/>
            <person name="Dong J."/>
            <person name="Sun L."/>
            <person name="Xue Y."/>
            <person name="Zhao A."/>
            <person name="Gao Y."/>
            <person name="Zhu J."/>
            <person name="Kan B."/>
            <person name="Ding K."/>
            <person name="Chen S."/>
            <person name="Cheng H."/>
            <person name="Yao Z."/>
            <person name="He B."/>
            <person name="Chen R."/>
            <person name="Ma D."/>
            <person name="Qiang B."/>
            <person name="Wen Y."/>
            <person name="Hou Y."/>
            <person name="Yu J."/>
        </authorList>
    </citation>
    <scope>NUCLEOTIDE SEQUENCE [LARGE SCALE GENOMIC DNA]</scope>
    <source>
        <strain>301 / Serotype 2a</strain>
    </source>
</reference>
<reference key="2">
    <citation type="journal article" date="2003" name="Infect. Immun.">
        <title>Complete genome sequence and comparative genomics of Shigella flexneri serotype 2a strain 2457T.</title>
        <authorList>
            <person name="Wei J."/>
            <person name="Goldberg M.B."/>
            <person name="Burland V."/>
            <person name="Venkatesan M.M."/>
            <person name="Deng W."/>
            <person name="Fournier G."/>
            <person name="Mayhew G.F."/>
            <person name="Plunkett G. III"/>
            <person name="Rose D.J."/>
            <person name="Darling A."/>
            <person name="Mau B."/>
            <person name="Perna N.T."/>
            <person name="Payne S.M."/>
            <person name="Runyen-Janecky L.J."/>
            <person name="Zhou S."/>
            <person name="Schwartz D.C."/>
            <person name="Blattner F.R."/>
        </authorList>
    </citation>
    <scope>NUCLEOTIDE SEQUENCE [LARGE SCALE GENOMIC DNA]</scope>
    <source>
        <strain>ATCC 700930 / 2457T / Serotype 2a</strain>
    </source>
</reference>
<gene>
    <name evidence="1" type="primary">wzzE</name>
    <name type="synonym">wzz</name>
    <name type="ordered locus">SF3859</name>
    <name type="ordered locus">S3901</name>
</gene>
<organism>
    <name type="scientific">Shigella flexneri</name>
    <dbReference type="NCBI Taxonomy" id="623"/>
    <lineage>
        <taxon>Bacteria</taxon>
        <taxon>Pseudomonadati</taxon>
        <taxon>Pseudomonadota</taxon>
        <taxon>Gammaproteobacteria</taxon>
        <taxon>Enterobacterales</taxon>
        <taxon>Enterobacteriaceae</taxon>
        <taxon>Shigella</taxon>
    </lineage>
</organism>
<name>WZZE_SHIFL</name>
<sequence>MTQPMPGKPAEDAENELDIRGLFRTLWAGKLWIIGMGLAFALIALAYTFFARQEWSSTAITDRPTVNMLGGYYSQQQFLRNLDVRSNMASADQPSVMDEAYKEFVMQLASWDTRREFWLQTDYYKQRMVGNSKADAALLDEMINNIQFIPGDFTRAVNDSVKLIAETAPDANNLLRQYVAFASQRAASHLNDELKGAWAARTIQMKAQVKRQEEVAKAIYDRRMNSIEQALKIAEQHNISRSATDVPAEELPDSEMFLLGRPMLQARLENLQAVGPAFDLDYDQNRAMLNTLNVGPTLDPRFQTYRYLRTPEEPVKRDSPRRAFLMIMWGIVGGLIGAGVALTRRCSK</sequence>
<feature type="chain" id="PRO_0000065998" description="ECA polysaccharide chain length modulation protein">
    <location>
        <begin position="1"/>
        <end position="348"/>
    </location>
</feature>
<feature type="transmembrane region" description="Helical" evidence="1">
    <location>
        <begin position="31"/>
        <end position="51"/>
    </location>
</feature>
<feature type="transmembrane region" description="Helical" evidence="1">
    <location>
        <begin position="323"/>
        <end position="343"/>
    </location>
</feature>